<protein>
    <recommendedName>
        <fullName evidence="8">Mitoguardin 2</fullName>
    </recommendedName>
    <alternativeName>
        <fullName evidence="9">Protein FAM73B</fullName>
    </alternativeName>
</protein>
<accession>Q7L4E1</accession>
<accession>Q8NBM3</accession>
<accession>Q8TEJ6</accession>
<accession>Q969E6</accession>
<organism>
    <name type="scientific">Homo sapiens</name>
    <name type="common">Human</name>
    <dbReference type="NCBI Taxonomy" id="9606"/>
    <lineage>
        <taxon>Eukaryota</taxon>
        <taxon>Metazoa</taxon>
        <taxon>Chordata</taxon>
        <taxon>Craniata</taxon>
        <taxon>Vertebrata</taxon>
        <taxon>Euteleostomi</taxon>
        <taxon>Mammalia</taxon>
        <taxon>Eutheria</taxon>
        <taxon>Euarchontoglires</taxon>
        <taxon>Primates</taxon>
        <taxon>Haplorrhini</taxon>
        <taxon>Catarrhini</taxon>
        <taxon>Hominidae</taxon>
        <taxon>Homo</taxon>
    </lineage>
</organism>
<feature type="chain" id="PRO_0000313657" description="Mitoguardin 2">
    <location>
        <begin position="1"/>
        <end position="593"/>
    </location>
</feature>
<feature type="transmembrane region" description="Helical" evidence="2">
    <location>
        <begin position="11"/>
        <end position="31"/>
    </location>
</feature>
<feature type="transmembrane region" description="Helical" evidence="2">
    <location>
        <begin position="42"/>
        <end position="62"/>
    </location>
</feature>
<feature type="region of interest" description="Disordered" evidence="3">
    <location>
        <begin position="103"/>
        <end position="141"/>
    </location>
</feature>
<feature type="region of interest" description="Disordered" evidence="3">
    <location>
        <begin position="196"/>
        <end position="231"/>
    </location>
</feature>
<feature type="short sequence motif" description="FFAT" evidence="5">
    <location>
        <begin position="292"/>
        <end position="298"/>
    </location>
</feature>
<feature type="compositionally biased region" description="Low complexity" evidence="3">
    <location>
        <begin position="106"/>
        <end position="116"/>
    </location>
</feature>
<feature type="compositionally biased region" description="Low complexity" evidence="3">
    <location>
        <begin position="123"/>
        <end position="141"/>
    </location>
</feature>
<feature type="modified residue" description="Phosphoserine" evidence="1">
    <location>
        <position position="132"/>
    </location>
</feature>
<feature type="modified residue" description="Phosphothreonine" evidence="1">
    <location>
        <position position="206"/>
    </location>
</feature>
<feature type="modified residue" description="Phosphoserine" evidence="1">
    <location>
        <position position="220"/>
    </location>
</feature>
<feature type="modified residue" description="Phosphoserine" evidence="14">
    <location>
        <position position="224"/>
    </location>
</feature>
<feature type="modified residue" description="Phosphoserine" evidence="1">
    <location>
        <position position="228"/>
    </location>
</feature>
<feature type="modified residue" description="Phosphothreonine" evidence="14">
    <location>
        <position position="273"/>
    </location>
</feature>
<feature type="modified residue" description="Phosphoserine" evidence="12 13 14">
    <location>
        <position position="276"/>
    </location>
</feature>
<feature type="modified residue" description="Phosphoserine" evidence="10">
    <location>
        <position position="295"/>
    </location>
</feature>
<feature type="splice variant" id="VSP_030087" description="In isoform 2." evidence="6">
    <original>PESQRKEFAEKLESLLHRAYHLQEEFGSTFPADSMLLDLERTLMLPLTEGSLRLRADDEDSLTSEDSFFSATELFESLQTGDYPIPLSRPAAAYEEAL</original>
    <variation>TESHSVARLECSGAISAQCNLRFLGSRDSPASASQVAGITARVTAEGVCREAGVPAAPCLPPAGGVRLHLPRRQHAARPREDPHAAPDRGLAAAAGGR</variation>
    <location>
        <begin position="226"/>
        <end position="323"/>
    </location>
</feature>
<feature type="splice variant" id="VSP_030088" description="In isoform 2." evidence="6">
    <location>
        <begin position="324"/>
        <end position="593"/>
    </location>
</feature>
<feature type="splice variant" id="VSP_030089" description="In isoform 3." evidence="7">
    <original>TELLGCYSDQDF</original>
    <variation>APKASWRATRRC</variation>
    <location>
        <begin position="338"/>
        <end position="349"/>
    </location>
</feature>
<feature type="splice variant" id="VSP_030090" description="In isoform 3." evidence="7">
    <location>
        <begin position="350"/>
        <end position="593"/>
    </location>
</feature>
<feature type="sequence variant" id="VAR_037690" description="In dbSNP:rs6478859.">
    <original>E</original>
    <variation>K</variation>
    <location>
        <position position="78"/>
    </location>
</feature>
<feature type="sequence variant" id="VAR_037691" description="In dbSNP:rs11544968.">
    <original>V</original>
    <variation>A</variation>
    <location>
        <position position="100"/>
    </location>
</feature>
<feature type="sequence variant" id="VAR_037692" description="In dbSNP:rs17452596.">
    <original>G</original>
    <variation>S</variation>
    <location>
        <position position="212"/>
    </location>
</feature>
<feature type="sequence conflict" description="In Ref. 1; BAB84953." evidence="9" ref="1">
    <original>A</original>
    <variation>G</variation>
    <location>
        <position position="62"/>
    </location>
</feature>
<comment type="function">
    <text evidence="4">Regulator of mitochondrial fusion: acts by forming homo- and heterodimers at the mitochondrial outer membrane and facilitating the formation of PLD6/MitoPLD dimers. May act by regulating phospholipid metabolism via PLD6/MitoPLD.</text>
</comment>
<comment type="subunit">
    <text evidence="4 5">Homodimer and heterodimer; forms heterodimers with MIGA1 (PubMed:26711011). Interacts with PLD6/MitoPLD (PubMed:26711011). Interacts (via phosphorylated FFAT motif) with MOSPD2, VAPA and VAPB (PubMed:33124732).</text>
</comment>
<comment type="subcellular location">
    <subcellularLocation>
        <location evidence="4">Mitochondrion outer membrane</location>
        <topology evidence="2">Multi-pass membrane protein</topology>
    </subcellularLocation>
</comment>
<comment type="alternative products">
    <event type="alternative splicing"/>
    <isoform>
        <id>Q7L4E1-1</id>
        <name>1</name>
        <sequence type="displayed"/>
    </isoform>
    <isoform>
        <id>Q7L4E1-2</id>
        <name>2</name>
        <sequence type="described" ref="VSP_030087 VSP_030088"/>
    </isoform>
    <isoform>
        <id>Q7L4E1-3</id>
        <name>3</name>
        <sequence type="described" ref="VSP_030089 VSP_030090"/>
    </isoform>
</comment>
<comment type="domain">
    <text evidence="5">The FFAT motif is involved in the interaction with MOSPD2, VAPA and VAPB and its phosphorylation regulates these interactions.</text>
</comment>
<comment type="PTM">
    <text evidence="5">Phosphorylation at Ser-295 of the FFAT motif activates interaction with MOSPD2, VAPA and VAPB.</text>
</comment>
<comment type="similarity">
    <text evidence="9">Belongs to the mitoguardin family.</text>
</comment>
<comment type="sequence caution" evidence="9">
    <conflict type="erroneous initiation">
        <sequence resource="EMBL-CDS" id="BAB55159"/>
    </conflict>
    <text>Truncated N-terminus.</text>
</comment>
<comment type="sequence caution" evidence="9">
    <conflict type="erroneous initiation">
        <sequence resource="EMBL-CDS" id="BAB84953"/>
    </conflict>
    <text>Extended N-terminus.</text>
</comment>
<comment type="sequence caution" evidence="9">
    <conflict type="erroneous gene model prediction">
        <sequence resource="EMBL-CDS" id="EAW87861"/>
    </conflict>
</comment>
<dbReference type="EMBL" id="AK074127">
    <property type="protein sequence ID" value="BAB84953.1"/>
    <property type="status" value="ALT_INIT"/>
    <property type="molecule type" value="mRNA"/>
</dbReference>
<dbReference type="EMBL" id="AK075421">
    <property type="protein sequence ID" value="BAC11611.1"/>
    <property type="molecule type" value="mRNA"/>
</dbReference>
<dbReference type="EMBL" id="AL592211">
    <property type="status" value="NOT_ANNOTATED_CDS"/>
    <property type="molecule type" value="Genomic_DNA"/>
</dbReference>
<dbReference type="EMBL" id="CH471090">
    <property type="protein sequence ID" value="EAW87861.1"/>
    <property type="status" value="ALT_SEQ"/>
    <property type="molecule type" value="Genomic_DNA"/>
</dbReference>
<dbReference type="EMBL" id="CH471090">
    <property type="protein sequence ID" value="EAW87862.1"/>
    <property type="molecule type" value="Genomic_DNA"/>
</dbReference>
<dbReference type="EMBL" id="CH471090">
    <property type="protein sequence ID" value="EAW87864.1"/>
    <property type="molecule type" value="Genomic_DNA"/>
</dbReference>
<dbReference type="EMBL" id="BC009114">
    <property type="protein sequence ID" value="AAH09114.2"/>
    <property type="molecule type" value="mRNA"/>
</dbReference>
<dbReference type="EMBL" id="AK027502">
    <property type="protein sequence ID" value="BAB55159.1"/>
    <property type="status" value="ALT_INIT"/>
    <property type="molecule type" value="mRNA"/>
</dbReference>
<dbReference type="CCDS" id="CCDS6917.1">
    <molecule id="Q7L4E1-1"/>
</dbReference>
<dbReference type="RefSeq" id="NP_001316919.1">
    <molecule id="Q7L4E1-1"/>
    <property type="nucleotide sequence ID" value="NM_001329990.2"/>
</dbReference>
<dbReference type="RefSeq" id="NP_116198.3">
    <property type="nucleotide sequence ID" value="NM_032809.3"/>
</dbReference>
<dbReference type="SMR" id="Q7L4E1"/>
<dbReference type="BioGRID" id="124335">
    <property type="interactions" value="22"/>
</dbReference>
<dbReference type="FunCoup" id="Q7L4E1">
    <property type="interactions" value="992"/>
</dbReference>
<dbReference type="IntAct" id="Q7L4E1">
    <property type="interactions" value="16"/>
</dbReference>
<dbReference type="STRING" id="9606.ENSP00000351138"/>
<dbReference type="TCDB" id="1.R.1.1.1">
    <property type="family name" value="the membrane contact site (mcs) family"/>
</dbReference>
<dbReference type="iPTMnet" id="Q7L4E1"/>
<dbReference type="PhosphoSitePlus" id="Q7L4E1"/>
<dbReference type="BioMuta" id="MIGA2"/>
<dbReference type="DMDM" id="74749888"/>
<dbReference type="jPOST" id="Q7L4E1"/>
<dbReference type="MassIVE" id="Q7L4E1"/>
<dbReference type="PaxDb" id="9606-ENSP00000351138"/>
<dbReference type="PeptideAtlas" id="Q7L4E1"/>
<dbReference type="ProteomicsDB" id="68774">
    <molecule id="Q7L4E1-1"/>
</dbReference>
<dbReference type="ProteomicsDB" id="68775">
    <molecule id="Q7L4E1-2"/>
</dbReference>
<dbReference type="ProteomicsDB" id="68776">
    <molecule id="Q7L4E1-3"/>
</dbReference>
<dbReference type="Pumba" id="Q7L4E1"/>
<dbReference type="Antibodypedia" id="50430">
    <property type="antibodies" value="18 antibodies from 10 providers"/>
</dbReference>
<dbReference type="DNASU" id="84895"/>
<dbReference type="Ensembl" id="ENST00000358369.8">
    <molecule id="Q7L4E1-1"/>
    <property type="protein sequence ID" value="ENSP00000351138.4"/>
    <property type="gene ID" value="ENSG00000148343.19"/>
</dbReference>
<dbReference type="Ensembl" id="ENST00000439290.5">
    <molecule id="Q7L4E1-2"/>
    <property type="protein sequence ID" value="ENSP00000391603.1"/>
    <property type="gene ID" value="ENSG00000148343.19"/>
</dbReference>
<dbReference type="Ensembl" id="ENST00000445183.5">
    <molecule id="Q7L4E1-3"/>
    <property type="protein sequence ID" value="ENSP00000396618.1"/>
    <property type="gene ID" value="ENSG00000148343.19"/>
</dbReference>
<dbReference type="Ensembl" id="ENST00000684074.1">
    <molecule id="Q7L4E1-1"/>
    <property type="protein sequence ID" value="ENSP00000506871.1"/>
    <property type="gene ID" value="ENSG00000148343.19"/>
</dbReference>
<dbReference type="GeneID" id="84895"/>
<dbReference type="KEGG" id="hsa:84895"/>
<dbReference type="MANE-Select" id="ENST00000684074.1">
    <property type="protein sequence ID" value="ENSP00000506871.1"/>
    <property type="RefSeq nucleotide sequence ID" value="NM_001329990.2"/>
    <property type="RefSeq protein sequence ID" value="NP_001316919.1"/>
</dbReference>
<dbReference type="UCSC" id="uc004bxa.4">
    <molecule id="Q7L4E1-1"/>
    <property type="organism name" value="human"/>
</dbReference>
<dbReference type="AGR" id="HGNC:23621"/>
<dbReference type="CTD" id="84895"/>
<dbReference type="DisGeNET" id="84895"/>
<dbReference type="GeneCards" id="MIGA2"/>
<dbReference type="HGNC" id="HGNC:23621">
    <property type="gene designation" value="MIGA2"/>
</dbReference>
<dbReference type="HPA" id="ENSG00000148343">
    <property type="expression patterns" value="Low tissue specificity"/>
</dbReference>
<dbReference type="MIM" id="616774">
    <property type="type" value="gene"/>
</dbReference>
<dbReference type="neXtProt" id="NX_Q7L4E1"/>
<dbReference type="OpenTargets" id="ENSG00000148343"/>
<dbReference type="PharmGKB" id="PA134896424"/>
<dbReference type="VEuPathDB" id="HostDB:ENSG00000148343"/>
<dbReference type="eggNOG" id="KOG3831">
    <property type="taxonomic scope" value="Eukaryota"/>
</dbReference>
<dbReference type="GeneTree" id="ENSGT00390000008565"/>
<dbReference type="HOGENOM" id="CLU_860408_0_0_1"/>
<dbReference type="InParanoid" id="Q7L4E1"/>
<dbReference type="OMA" id="AHFYVIS"/>
<dbReference type="OrthoDB" id="8880065at2759"/>
<dbReference type="PAN-GO" id="Q7L4E1">
    <property type="GO annotations" value="1 GO annotation based on evolutionary models"/>
</dbReference>
<dbReference type="PhylomeDB" id="Q7L4E1"/>
<dbReference type="TreeFam" id="TF313896"/>
<dbReference type="PathwayCommons" id="Q7L4E1"/>
<dbReference type="Reactome" id="R-HSA-1483166">
    <property type="pathway name" value="Synthesis of PA"/>
</dbReference>
<dbReference type="SignaLink" id="Q7L4E1"/>
<dbReference type="BioGRID-ORCS" id="84895">
    <property type="hits" value="38 hits in 1158 CRISPR screens"/>
</dbReference>
<dbReference type="ChiTaRS" id="MIGA2">
    <property type="organism name" value="human"/>
</dbReference>
<dbReference type="GeneWiki" id="FAM73B"/>
<dbReference type="GenomeRNAi" id="84895"/>
<dbReference type="Pharos" id="Q7L4E1">
    <property type="development level" value="Tbio"/>
</dbReference>
<dbReference type="PRO" id="PR:Q7L4E1"/>
<dbReference type="Proteomes" id="UP000005640">
    <property type="component" value="Chromosome 9"/>
</dbReference>
<dbReference type="RNAct" id="Q7L4E1">
    <property type="molecule type" value="protein"/>
</dbReference>
<dbReference type="Bgee" id="ENSG00000148343">
    <property type="expression patterns" value="Expressed in pancreatic ductal cell and 162 other cell types or tissues"/>
</dbReference>
<dbReference type="ExpressionAtlas" id="Q7L4E1">
    <property type="expression patterns" value="baseline and differential"/>
</dbReference>
<dbReference type="GO" id="GO:0005741">
    <property type="term" value="C:mitochondrial outer membrane"/>
    <property type="evidence" value="ECO:0007669"/>
    <property type="project" value="UniProtKB-SubCell"/>
</dbReference>
<dbReference type="GO" id="GO:0005739">
    <property type="term" value="C:mitochondrion"/>
    <property type="evidence" value="ECO:0006056"/>
    <property type="project" value="FlyBase"/>
</dbReference>
<dbReference type="GO" id="GO:0005886">
    <property type="term" value="C:plasma membrane"/>
    <property type="evidence" value="ECO:0000314"/>
    <property type="project" value="UniProtKB"/>
</dbReference>
<dbReference type="GO" id="GO:0046982">
    <property type="term" value="F:protein heterodimerization activity"/>
    <property type="evidence" value="ECO:0000314"/>
    <property type="project" value="UniProtKB"/>
</dbReference>
<dbReference type="GO" id="GO:0042803">
    <property type="term" value="F:protein homodimerization activity"/>
    <property type="evidence" value="ECO:0000314"/>
    <property type="project" value="UniProtKB"/>
</dbReference>
<dbReference type="GO" id="GO:0060348">
    <property type="term" value="P:bone development"/>
    <property type="evidence" value="ECO:0007669"/>
    <property type="project" value="Ensembl"/>
</dbReference>
<dbReference type="GO" id="GO:0008053">
    <property type="term" value="P:mitochondrial fusion"/>
    <property type="evidence" value="ECO:0000314"/>
    <property type="project" value="UniProtKB"/>
</dbReference>
<dbReference type="InterPro" id="IPR019392">
    <property type="entry name" value="Miga"/>
</dbReference>
<dbReference type="PANTHER" id="PTHR21508">
    <property type="entry name" value="MITOGUARDIN"/>
    <property type="match status" value="1"/>
</dbReference>
<dbReference type="PANTHER" id="PTHR21508:SF4">
    <property type="entry name" value="MITOGUARDIN 2"/>
    <property type="match status" value="1"/>
</dbReference>
<dbReference type="Pfam" id="PF10265">
    <property type="entry name" value="Miga"/>
    <property type="match status" value="1"/>
</dbReference>
<evidence type="ECO:0000250" key="1">
    <source>
        <dbReference type="UniProtKB" id="Q8BK03"/>
    </source>
</evidence>
<evidence type="ECO:0000255" key="2"/>
<evidence type="ECO:0000256" key="3">
    <source>
        <dbReference type="SAM" id="MobiDB-lite"/>
    </source>
</evidence>
<evidence type="ECO:0000269" key="4">
    <source>
    </source>
</evidence>
<evidence type="ECO:0000269" key="5">
    <source>
    </source>
</evidence>
<evidence type="ECO:0000303" key="6">
    <source>
    </source>
</evidence>
<evidence type="ECO:0000303" key="7">
    <source>
    </source>
</evidence>
<evidence type="ECO:0000303" key="8">
    <source>
    </source>
</evidence>
<evidence type="ECO:0000305" key="9"/>
<evidence type="ECO:0000305" key="10">
    <source>
    </source>
</evidence>
<evidence type="ECO:0000312" key="11">
    <source>
        <dbReference type="HGNC" id="HGNC:23621"/>
    </source>
</evidence>
<evidence type="ECO:0007744" key="12">
    <source>
    </source>
</evidence>
<evidence type="ECO:0007744" key="13">
    <source>
    </source>
</evidence>
<evidence type="ECO:0007744" key="14">
    <source>
    </source>
</evidence>
<sequence length="593" mass="65531">MAFRRAEGTSMIQALAMTVAEIPVFLYTTFGQSAFSQLRLTPGLRKVLFATALGTVALALAAHQLKRRRRRKKQVGPEMGGEQLGTVPLPILLARKVPSVKKGYSSRRVQSPSSKSNDTLSGISSIEPSKHSGSSHSVASMMAVNSSSPTAACSGLWDARGMEESLTTSDGNAESLYMQGMELFEEALQKWEQALSVGQRGDSGSTPMPRDGLRNPETASEPLSEPESQRKEFAEKLESLLHRAYHLQEEFGSTFPADSMLLDLERTLMLPLTEGSLRLRADDEDSLTSEDSFFSATELFESLQTGDYPIPLSRPAAAYEEALQLVKEGRVPCRTLRTELLGCYSDQDFLAKLHCVRQAFEGLLEDKSNQLFFGKVGRQMVTGLMTKAEKSPKGFLESYEEMLSYALRPETWATTRLELEGRGVVCMSFFDIVLDFILMDAFEDLENPPASVLAVLRNRWLSDSFKETALATACWSVLKAKRRLLMVPDGFISHFYSVSEHVSPVLAFGFLGPKPQLAEVCAFFKHQIVQYLRDMFDLDNVRYTSLPALADDILQLSRRRSEILLGYLGVPAASSAGVNGALPRENGPLGELQ</sequence>
<keyword id="KW-0025">Alternative splicing</keyword>
<keyword id="KW-0472">Membrane</keyword>
<keyword id="KW-0496">Mitochondrion</keyword>
<keyword id="KW-1000">Mitochondrion outer membrane</keyword>
<keyword id="KW-0597">Phosphoprotein</keyword>
<keyword id="KW-1267">Proteomics identification</keyword>
<keyword id="KW-1185">Reference proteome</keyword>
<keyword id="KW-0812">Transmembrane</keyword>
<keyword id="KW-1133">Transmembrane helix</keyword>
<reference key="1">
    <citation type="journal article" date="2003" name="DNA Res.">
        <title>Characterization of long cDNA clones from human adult spleen. II. The complete sequences of 81 cDNA clones.</title>
        <authorList>
            <person name="Jikuya H."/>
            <person name="Takano J."/>
            <person name="Kikuno R."/>
            <person name="Hirosawa M."/>
            <person name="Nagase T."/>
            <person name="Nomura N."/>
            <person name="Ohara O."/>
        </authorList>
    </citation>
    <scope>NUCLEOTIDE SEQUENCE [LARGE SCALE MRNA] (ISOFORM 2)</scope>
    <source>
        <tissue>Spleen</tissue>
    </source>
</reference>
<reference key="2">
    <citation type="journal article" date="2005" name="DNA Res.">
        <title>Signal sequence and keyword trap in silico for selection of full-length human cDNAs encoding secretion or membrane proteins from oligo-capped cDNA libraries.</title>
        <authorList>
            <person name="Otsuki T."/>
            <person name="Ota T."/>
            <person name="Nishikawa T."/>
            <person name="Hayashi K."/>
            <person name="Suzuki Y."/>
            <person name="Yamamoto J."/>
            <person name="Wakamatsu A."/>
            <person name="Kimura K."/>
            <person name="Sakamoto K."/>
            <person name="Hatano N."/>
            <person name="Kawai Y."/>
            <person name="Ishii S."/>
            <person name="Saito K."/>
            <person name="Kojima S."/>
            <person name="Sugiyama T."/>
            <person name="Ono T."/>
            <person name="Okano K."/>
            <person name="Yoshikawa Y."/>
            <person name="Aotsuka S."/>
            <person name="Sasaki N."/>
            <person name="Hattori A."/>
            <person name="Okumura K."/>
            <person name="Nagai K."/>
            <person name="Sugano S."/>
            <person name="Isogai T."/>
        </authorList>
    </citation>
    <scope>NUCLEOTIDE SEQUENCE [LARGE SCALE MRNA] (ISOFORM 3)</scope>
    <source>
        <tissue>Placenta</tissue>
    </source>
</reference>
<reference key="3">
    <citation type="journal article" date="2004" name="Nature">
        <title>DNA sequence and analysis of human chromosome 9.</title>
        <authorList>
            <person name="Humphray S.J."/>
            <person name="Oliver K."/>
            <person name="Hunt A.R."/>
            <person name="Plumb R.W."/>
            <person name="Loveland J.E."/>
            <person name="Howe K.L."/>
            <person name="Andrews T.D."/>
            <person name="Searle S."/>
            <person name="Hunt S.E."/>
            <person name="Scott C.E."/>
            <person name="Jones M.C."/>
            <person name="Ainscough R."/>
            <person name="Almeida J.P."/>
            <person name="Ambrose K.D."/>
            <person name="Ashwell R.I.S."/>
            <person name="Babbage A.K."/>
            <person name="Babbage S."/>
            <person name="Bagguley C.L."/>
            <person name="Bailey J."/>
            <person name="Banerjee R."/>
            <person name="Barker D.J."/>
            <person name="Barlow K.F."/>
            <person name="Bates K."/>
            <person name="Beasley H."/>
            <person name="Beasley O."/>
            <person name="Bird C.P."/>
            <person name="Bray-Allen S."/>
            <person name="Brown A.J."/>
            <person name="Brown J.Y."/>
            <person name="Burford D."/>
            <person name="Burrill W."/>
            <person name="Burton J."/>
            <person name="Carder C."/>
            <person name="Carter N.P."/>
            <person name="Chapman J.C."/>
            <person name="Chen Y."/>
            <person name="Clarke G."/>
            <person name="Clark S.Y."/>
            <person name="Clee C.M."/>
            <person name="Clegg S."/>
            <person name="Collier R.E."/>
            <person name="Corby N."/>
            <person name="Crosier M."/>
            <person name="Cummings A.T."/>
            <person name="Davies J."/>
            <person name="Dhami P."/>
            <person name="Dunn M."/>
            <person name="Dutta I."/>
            <person name="Dyer L.W."/>
            <person name="Earthrowl M.E."/>
            <person name="Faulkner L."/>
            <person name="Fleming C.J."/>
            <person name="Frankish A."/>
            <person name="Frankland J.A."/>
            <person name="French L."/>
            <person name="Fricker D.G."/>
            <person name="Garner P."/>
            <person name="Garnett J."/>
            <person name="Ghori J."/>
            <person name="Gilbert J.G.R."/>
            <person name="Glison C."/>
            <person name="Grafham D.V."/>
            <person name="Gribble S."/>
            <person name="Griffiths C."/>
            <person name="Griffiths-Jones S."/>
            <person name="Grocock R."/>
            <person name="Guy J."/>
            <person name="Hall R.E."/>
            <person name="Hammond S."/>
            <person name="Harley J.L."/>
            <person name="Harrison E.S.I."/>
            <person name="Hart E.A."/>
            <person name="Heath P.D."/>
            <person name="Henderson C.D."/>
            <person name="Hopkins B.L."/>
            <person name="Howard P.J."/>
            <person name="Howden P.J."/>
            <person name="Huckle E."/>
            <person name="Johnson C."/>
            <person name="Johnson D."/>
            <person name="Joy A.A."/>
            <person name="Kay M."/>
            <person name="Keenan S."/>
            <person name="Kershaw J.K."/>
            <person name="Kimberley A.M."/>
            <person name="King A."/>
            <person name="Knights A."/>
            <person name="Laird G.K."/>
            <person name="Langford C."/>
            <person name="Lawlor S."/>
            <person name="Leongamornlert D.A."/>
            <person name="Leversha M."/>
            <person name="Lloyd C."/>
            <person name="Lloyd D.M."/>
            <person name="Lovell J."/>
            <person name="Martin S."/>
            <person name="Mashreghi-Mohammadi M."/>
            <person name="Matthews L."/>
            <person name="McLaren S."/>
            <person name="McLay K.E."/>
            <person name="McMurray A."/>
            <person name="Milne S."/>
            <person name="Nickerson T."/>
            <person name="Nisbett J."/>
            <person name="Nordsiek G."/>
            <person name="Pearce A.V."/>
            <person name="Peck A.I."/>
            <person name="Porter K.M."/>
            <person name="Pandian R."/>
            <person name="Pelan S."/>
            <person name="Phillimore B."/>
            <person name="Povey S."/>
            <person name="Ramsey Y."/>
            <person name="Rand V."/>
            <person name="Scharfe M."/>
            <person name="Sehra H.K."/>
            <person name="Shownkeen R."/>
            <person name="Sims S.K."/>
            <person name="Skuce C.D."/>
            <person name="Smith M."/>
            <person name="Steward C.A."/>
            <person name="Swarbreck D."/>
            <person name="Sycamore N."/>
            <person name="Tester J."/>
            <person name="Thorpe A."/>
            <person name="Tracey A."/>
            <person name="Tromans A."/>
            <person name="Thomas D.W."/>
            <person name="Wall M."/>
            <person name="Wallis J.M."/>
            <person name="West A.P."/>
            <person name="Whitehead S.L."/>
            <person name="Willey D.L."/>
            <person name="Williams S.A."/>
            <person name="Wilming L."/>
            <person name="Wray P.W."/>
            <person name="Young L."/>
            <person name="Ashurst J.L."/>
            <person name="Coulson A."/>
            <person name="Blocker H."/>
            <person name="Durbin R.M."/>
            <person name="Sulston J.E."/>
            <person name="Hubbard T."/>
            <person name="Jackson M.J."/>
            <person name="Bentley D.R."/>
            <person name="Beck S."/>
            <person name="Rogers J."/>
            <person name="Dunham I."/>
        </authorList>
    </citation>
    <scope>NUCLEOTIDE SEQUENCE [LARGE SCALE GENOMIC DNA]</scope>
</reference>
<reference key="4">
    <citation type="submission" date="2005-07" db="EMBL/GenBank/DDBJ databases">
        <authorList>
            <person name="Mural R.J."/>
            <person name="Istrail S."/>
            <person name="Sutton G.G."/>
            <person name="Florea L."/>
            <person name="Halpern A.L."/>
            <person name="Mobarry C.M."/>
            <person name="Lippert R."/>
            <person name="Walenz B."/>
            <person name="Shatkay H."/>
            <person name="Dew I."/>
            <person name="Miller J.R."/>
            <person name="Flanigan M.J."/>
            <person name="Edwards N.J."/>
            <person name="Bolanos R."/>
            <person name="Fasulo D."/>
            <person name="Halldorsson B.V."/>
            <person name="Hannenhalli S."/>
            <person name="Turner R."/>
            <person name="Yooseph S."/>
            <person name="Lu F."/>
            <person name="Nusskern D.R."/>
            <person name="Shue B.C."/>
            <person name="Zheng X.H."/>
            <person name="Zhong F."/>
            <person name="Delcher A.L."/>
            <person name="Huson D.H."/>
            <person name="Kravitz S.A."/>
            <person name="Mouchard L."/>
            <person name="Reinert K."/>
            <person name="Remington K.A."/>
            <person name="Clark A.G."/>
            <person name="Waterman M.S."/>
            <person name="Eichler E.E."/>
            <person name="Adams M.D."/>
            <person name="Hunkapiller M.W."/>
            <person name="Myers E.W."/>
            <person name="Venter J.C."/>
        </authorList>
    </citation>
    <scope>NUCLEOTIDE SEQUENCE [LARGE SCALE GENOMIC DNA]</scope>
</reference>
<reference key="5">
    <citation type="journal article" date="2004" name="Genome Res.">
        <title>The status, quality, and expansion of the NIH full-length cDNA project: the Mammalian Gene Collection (MGC).</title>
        <authorList>
            <consortium name="The MGC Project Team"/>
        </authorList>
    </citation>
    <scope>NUCLEOTIDE SEQUENCE [LARGE SCALE MRNA] (ISOFORM 1)</scope>
    <source>
        <tissue>Brain</tissue>
    </source>
</reference>
<reference key="6">
    <citation type="journal article" date="2004" name="Nat. Genet.">
        <title>Complete sequencing and characterization of 21,243 full-length human cDNAs.</title>
        <authorList>
            <person name="Ota T."/>
            <person name="Suzuki Y."/>
            <person name="Nishikawa T."/>
            <person name="Otsuki T."/>
            <person name="Sugiyama T."/>
            <person name="Irie R."/>
            <person name="Wakamatsu A."/>
            <person name="Hayashi K."/>
            <person name="Sato H."/>
            <person name="Nagai K."/>
            <person name="Kimura K."/>
            <person name="Makita H."/>
            <person name="Sekine M."/>
            <person name="Obayashi M."/>
            <person name="Nishi T."/>
            <person name="Shibahara T."/>
            <person name="Tanaka T."/>
            <person name="Ishii S."/>
            <person name="Yamamoto J."/>
            <person name="Saito K."/>
            <person name="Kawai Y."/>
            <person name="Isono Y."/>
            <person name="Nakamura Y."/>
            <person name="Nagahari K."/>
            <person name="Murakami K."/>
            <person name="Yasuda T."/>
            <person name="Iwayanagi T."/>
            <person name="Wagatsuma M."/>
            <person name="Shiratori A."/>
            <person name="Sudo H."/>
            <person name="Hosoiri T."/>
            <person name="Kaku Y."/>
            <person name="Kodaira H."/>
            <person name="Kondo H."/>
            <person name="Sugawara M."/>
            <person name="Takahashi M."/>
            <person name="Kanda K."/>
            <person name="Yokoi T."/>
            <person name="Furuya T."/>
            <person name="Kikkawa E."/>
            <person name="Omura Y."/>
            <person name="Abe K."/>
            <person name="Kamihara K."/>
            <person name="Katsuta N."/>
            <person name="Sato K."/>
            <person name="Tanikawa M."/>
            <person name="Yamazaki M."/>
            <person name="Ninomiya K."/>
            <person name="Ishibashi T."/>
            <person name="Yamashita H."/>
            <person name="Murakawa K."/>
            <person name="Fujimori K."/>
            <person name="Tanai H."/>
            <person name="Kimata M."/>
            <person name="Watanabe M."/>
            <person name="Hiraoka S."/>
            <person name="Chiba Y."/>
            <person name="Ishida S."/>
            <person name="Ono Y."/>
            <person name="Takiguchi S."/>
            <person name="Watanabe S."/>
            <person name="Yosida M."/>
            <person name="Hotuta T."/>
            <person name="Kusano J."/>
            <person name="Kanehori K."/>
            <person name="Takahashi-Fujii A."/>
            <person name="Hara H."/>
            <person name="Tanase T.-O."/>
            <person name="Nomura Y."/>
            <person name="Togiya S."/>
            <person name="Komai F."/>
            <person name="Hara R."/>
            <person name="Takeuchi K."/>
            <person name="Arita M."/>
            <person name="Imose N."/>
            <person name="Musashino K."/>
            <person name="Yuuki H."/>
            <person name="Oshima A."/>
            <person name="Sasaki N."/>
            <person name="Aotsuka S."/>
            <person name="Yoshikawa Y."/>
            <person name="Matsunawa H."/>
            <person name="Ichihara T."/>
            <person name="Shiohata N."/>
            <person name="Sano S."/>
            <person name="Moriya S."/>
            <person name="Momiyama H."/>
            <person name="Satoh N."/>
            <person name="Takami S."/>
            <person name="Terashima Y."/>
            <person name="Suzuki O."/>
            <person name="Nakagawa S."/>
            <person name="Senoh A."/>
            <person name="Mizoguchi H."/>
            <person name="Goto Y."/>
            <person name="Shimizu F."/>
            <person name="Wakebe H."/>
            <person name="Hishigaki H."/>
            <person name="Watanabe T."/>
            <person name="Sugiyama A."/>
            <person name="Takemoto M."/>
            <person name="Kawakami B."/>
            <person name="Yamazaki M."/>
            <person name="Watanabe K."/>
            <person name="Kumagai A."/>
            <person name="Itakura S."/>
            <person name="Fukuzumi Y."/>
            <person name="Fujimori Y."/>
            <person name="Komiyama M."/>
            <person name="Tashiro H."/>
            <person name="Tanigami A."/>
            <person name="Fujiwara T."/>
            <person name="Ono T."/>
            <person name="Yamada K."/>
            <person name="Fujii Y."/>
            <person name="Ozaki K."/>
            <person name="Hirao M."/>
            <person name="Ohmori Y."/>
            <person name="Kawabata A."/>
            <person name="Hikiji T."/>
            <person name="Kobatake N."/>
            <person name="Inagaki H."/>
            <person name="Ikema Y."/>
            <person name="Okamoto S."/>
            <person name="Okitani R."/>
            <person name="Kawakami T."/>
            <person name="Noguchi S."/>
            <person name="Itoh T."/>
            <person name="Shigeta K."/>
            <person name="Senba T."/>
            <person name="Matsumura K."/>
            <person name="Nakajima Y."/>
            <person name="Mizuno T."/>
            <person name="Morinaga M."/>
            <person name="Sasaki M."/>
            <person name="Togashi T."/>
            <person name="Oyama M."/>
            <person name="Hata H."/>
            <person name="Watanabe M."/>
            <person name="Komatsu T."/>
            <person name="Mizushima-Sugano J."/>
            <person name="Satoh T."/>
            <person name="Shirai Y."/>
            <person name="Takahashi Y."/>
            <person name="Nakagawa K."/>
            <person name="Okumura K."/>
            <person name="Nagase T."/>
            <person name="Nomura N."/>
            <person name="Kikuchi H."/>
            <person name="Masuho Y."/>
            <person name="Yamashita R."/>
            <person name="Nakai K."/>
            <person name="Yada T."/>
            <person name="Nakamura Y."/>
            <person name="Ohara O."/>
            <person name="Isogai T."/>
            <person name="Sugano S."/>
        </authorList>
    </citation>
    <scope>NUCLEOTIDE SEQUENCE [LARGE SCALE MRNA] OF 308-593 (ISOFORM 1)</scope>
</reference>
<reference key="7">
    <citation type="journal article" date="2008" name="Proc. Natl. Acad. Sci. U.S.A.">
        <title>A quantitative atlas of mitotic phosphorylation.</title>
        <authorList>
            <person name="Dephoure N."/>
            <person name="Zhou C."/>
            <person name="Villen J."/>
            <person name="Beausoleil S.A."/>
            <person name="Bakalarski C.E."/>
            <person name="Elledge S.J."/>
            <person name="Gygi S.P."/>
        </authorList>
    </citation>
    <scope>PHOSPHORYLATION [LARGE SCALE ANALYSIS] AT SER-276</scope>
    <scope>IDENTIFICATION BY MASS SPECTROMETRY [LARGE SCALE ANALYSIS]</scope>
    <source>
        <tissue>Cervix carcinoma</tissue>
    </source>
</reference>
<reference key="8">
    <citation type="journal article" date="2009" name="Sci. Signal.">
        <title>Quantitative phosphoproteomic analysis of T cell receptor signaling reveals system-wide modulation of protein-protein interactions.</title>
        <authorList>
            <person name="Mayya V."/>
            <person name="Lundgren D.H."/>
            <person name="Hwang S.-I."/>
            <person name="Rezaul K."/>
            <person name="Wu L."/>
            <person name="Eng J.K."/>
            <person name="Rodionov V."/>
            <person name="Han D.K."/>
        </authorList>
    </citation>
    <scope>PHOSPHORYLATION [LARGE SCALE ANALYSIS] AT SER-276</scope>
    <scope>IDENTIFICATION BY MASS SPECTROMETRY [LARGE SCALE ANALYSIS]</scope>
    <source>
        <tissue>Leukemic T-cell</tissue>
    </source>
</reference>
<reference key="9">
    <citation type="journal article" date="2013" name="J. Proteome Res.">
        <title>Toward a comprehensive characterization of a human cancer cell phosphoproteome.</title>
        <authorList>
            <person name="Zhou H."/>
            <person name="Di Palma S."/>
            <person name="Preisinger C."/>
            <person name="Peng M."/>
            <person name="Polat A.N."/>
            <person name="Heck A.J."/>
            <person name="Mohammed S."/>
        </authorList>
    </citation>
    <scope>PHOSPHORYLATION [LARGE SCALE ANALYSIS] AT SER-224; THR-273 AND SER-276</scope>
    <scope>IDENTIFICATION BY MASS SPECTROMETRY [LARGE SCALE ANALYSIS]</scope>
    <source>
        <tissue>Cervix carcinoma</tissue>
        <tissue>Erythroleukemia</tissue>
    </source>
</reference>
<reference key="10">
    <citation type="journal article" date="2016" name="Mol. Cell">
        <title>Mitoguardin regulates mitochondrial fusion through MitoPLD and is required for neuronal homeostasis.</title>
        <authorList>
            <person name="Zhang Y."/>
            <person name="Liu X."/>
            <person name="Bai J."/>
            <person name="Tian X."/>
            <person name="Zhao X."/>
            <person name="Liu W."/>
            <person name="Duan X."/>
            <person name="Shang W."/>
            <person name="Fan H.Y."/>
            <person name="Tong C."/>
        </authorList>
    </citation>
    <scope>FUNCTION</scope>
    <scope>SUBCELLULAR LOCATION</scope>
    <scope>SUBUNIT</scope>
    <scope>INTERACTION WITH MIGA1 AND PLD6</scope>
</reference>
<reference key="11">
    <citation type="journal article" date="2020" name="EMBO J.">
        <title>FFAT motif phosphorylation controls formation and lipid transfer function of inter-organelle contacts.</title>
        <authorList>
            <person name="Di Mattia T."/>
            <person name="Martinet A."/>
            <person name="Ikhlef S."/>
            <person name="McEwen A.G."/>
            <person name="Nomine Y."/>
            <person name="Wendling C."/>
            <person name="Poussin-Courmontagne P."/>
            <person name="Voilquin L."/>
            <person name="Eberling P."/>
            <person name="Ruffenach F."/>
            <person name="Cavarelli J."/>
            <person name="Slee J."/>
            <person name="Levine T.P."/>
            <person name="Drin G."/>
            <person name="Tomasetto C."/>
            <person name="Alpy F."/>
        </authorList>
    </citation>
    <scope>INTERACTION WITH MOSPD2; VAPA AND VAPB</scope>
    <scope>FFAT MOTIF</scope>
    <scope>PHOSPHORYLATION AT SER-295</scope>
    <scope>DOMAIN</scope>
</reference>
<gene>
    <name evidence="8 11" type="primary">MIGA2</name>
    <name evidence="11" type="synonym">C9orf54</name>
    <name evidence="11" type="synonym">FAM73B</name>
    <name evidence="6" type="ORF">PSEC0112</name>
</gene>
<name>MIGA2_HUMAN</name>
<proteinExistence type="evidence at protein level"/>